<sequence>MTDDMHKTENFPPDWLLVESLDLEAQGVAHRADGKVVFIKGALPFELVSANVHRKKNNWEQGVVTAIHRESSQRVQPGCPHFGLHEGACGGCKMQHLHVGAQVAVKQRVLEDNLWHLGKVKADTILRPIEGPAWGYRYRARLSVRYVRKKGELLIGFHERKSGYVADMKECPVLPPHVSDLLLPLRALISAMEAMETCPQIELACGDSVTALVLRHMEPLTHGDLALLRGFAAQHAGVQWWLQPNGPETAHLLDEGGQALSYDLPEFGIHMPFKPTDFTQVNPHINRVLVSRALRLLDAKRHERVIDWFCGLGNFTLPIATQAREVLGVEGSEALVARSRQNFKLNQALAPVNKSLAATNFVARNLFEMTPELLIQDGAADKWLVDPPREGAVSLVQALAELHQQKLDPIGHPPIVGAVGWMPPKRIVYVSCNPSTLARDADLLVHQAGYRCSFAGVVNMFPHTAHVESMAVFDLEV</sequence>
<keyword id="KW-0004">4Fe-4S</keyword>
<keyword id="KW-0408">Iron</keyword>
<keyword id="KW-0411">Iron-sulfur</keyword>
<keyword id="KW-0479">Metal-binding</keyword>
<keyword id="KW-0489">Methyltransferase</keyword>
<keyword id="KW-1185">Reference proteome</keyword>
<keyword id="KW-0698">rRNA processing</keyword>
<keyword id="KW-0949">S-adenosyl-L-methionine</keyword>
<keyword id="KW-0808">Transferase</keyword>
<name>RLMD_ALBFT</name>
<protein>
    <recommendedName>
        <fullName evidence="1">23S rRNA (uracil(1939)-C(5))-methyltransferase RlmD</fullName>
        <ecNumber evidence="1">2.1.1.190</ecNumber>
    </recommendedName>
    <alternativeName>
        <fullName evidence="1">23S rRNA(m5U1939)-methyltransferase</fullName>
    </alternativeName>
</protein>
<reference key="1">
    <citation type="submission" date="2006-02" db="EMBL/GenBank/DDBJ databases">
        <title>Complete sequence of chromosome of Rhodoferax ferrireducens DSM 15236.</title>
        <authorList>
            <person name="Copeland A."/>
            <person name="Lucas S."/>
            <person name="Lapidus A."/>
            <person name="Barry K."/>
            <person name="Detter J.C."/>
            <person name="Glavina del Rio T."/>
            <person name="Hammon N."/>
            <person name="Israni S."/>
            <person name="Pitluck S."/>
            <person name="Brettin T."/>
            <person name="Bruce D."/>
            <person name="Han C."/>
            <person name="Tapia R."/>
            <person name="Gilna P."/>
            <person name="Kiss H."/>
            <person name="Schmutz J."/>
            <person name="Larimer F."/>
            <person name="Land M."/>
            <person name="Kyrpides N."/>
            <person name="Ivanova N."/>
            <person name="Richardson P."/>
        </authorList>
    </citation>
    <scope>NUCLEOTIDE SEQUENCE [LARGE SCALE GENOMIC DNA]</scope>
    <source>
        <strain>ATCC BAA-621 / DSM 15236 / T118</strain>
    </source>
</reference>
<feature type="chain" id="PRO_0000282059" description="23S rRNA (uracil(1939)-C(5))-methyltransferase RlmD">
    <location>
        <begin position="1"/>
        <end position="477"/>
    </location>
</feature>
<feature type="domain" description="TRAM" evidence="1">
    <location>
        <begin position="7"/>
        <end position="66"/>
    </location>
</feature>
<feature type="active site" description="Nucleophile" evidence="1">
    <location>
        <position position="432"/>
    </location>
</feature>
<feature type="binding site" evidence="1">
    <location>
        <position position="79"/>
    </location>
    <ligand>
        <name>[4Fe-4S] cluster</name>
        <dbReference type="ChEBI" id="CHEBI:49883"/>
    </ligand>
</feature>
<feature type="binding site" evidence="1">
    <location>
        <position position="89"/>
    </location>
    <ligand>
        <name>[4Fe-4S] cluster</name>
        <dbReference type="ChEBI" id="CHEBI:49883"/>
    </ligand>
</feature>
<feature type="binding site" evidence="1">
    <location>
        <position position="92"/>
    </location>
    <ligand>
        <name>[4Fe-4S] cluster</name>
        <dbReference type="ChEBI" id="CHEBI:49883"/>
    </ligand>
</feature>
<feature type="binding site" evidence="1">
    <location>
        <position position="171"/>
    </location>
    <ligand>
        <name>[4Fe-4S] cluster</name>
        <dbReference type="ChEBI" id="CHEBI:49883"/>
    </ligand>
</feature>
<feature type="binding site" evidence="1">
    <location>
        <position position="280"/>
    </location>
    <ligand>
        <name>S-adenosyl-L-methionine</name>
        <dbReference type="ChEBI" id="CHEBI:59789"/>
    </ligand>
</feature>
<feature type="binding site" evidence="1">
    <location>
        <position position="309"/>
    </location>
    <ligand>
        <name>S-adenosyl-L-methionine</name>
        <dbReference type="ChEBI" id="CHEBI:59789"/>
    </ligand>
</feature>
<feature type="binding site" evidence="1">
    <location>
        <position position="314"/>
    </location>
    <ligand>
        <name>S-adenosyl-L-methionine</name>
        <dbReference type="ChEBI" id="CHEBI:59789"/>
    </ligand>
</feature>
<feature type="binding site" evidence="1">
    <location>
        <position position="330"/>
    </location>
    <ligand>
        <name>S-adenosyl-L-methionine</name>
        <dbReference type="ChEBI" id="CHEBI:59789"/>
    </ligand>
</feature>
<feature type="binding site" evidence="1">
    <location>
        <position position="365"/>
    </location>
    <ligand>
        <name>S-adenosyl-L-methionine</name>
        <dbReference type="ChEBI" id="CHEBI:59789"/>
    </ligand>
</feature>
<feature type="binding site" evidence="1">
    <location>
        <position position="386"/>
    </location>
    <ligand>
        <name>S-adenosyl-L-methionine</name>
        <dbReference type="ChEBI" id="CHEBI:59789"/>
    </ligand>
</feature>
<gene>
    <name evidence="1" type="primary">rlmD</name>
    <name type="synonym">rumA</name>
    <name type="ordered locus">Rfer_2778</name>
</gene>
<comment type="function">
    <text evidence="1">Catalyzes the formation of 5-methyl-uridine at position 1939 (m5U1939) in 23S rRNA.</text>
</comment>
<comment type="catalytic activity">
    <reaction evidence="1">
        <text>uridine(1939) in 23S rRNA + S-adenosyl-L-methionine = 5-methyluridine(1939) in 23S rRNA + S-adenosyl-L-homocysteine + H(+)</text>
        <dbReference type="Rhea" id="RHEA:42908"/>
        <dbReference type="Rhea" id="RHEA-COMP:10278"/>
        <dbReference type="Rhea" id="RHEA-COMP:10279"/>
        <dbReference type="ChEBI" id="CHEBI:15378"/>
        <dbReference type="ChEBI" id="CHEBI:57856"/>
        <dbReference type="ChEBI" id="CHEBI:59789"/>
        <dbReference type="ChEBI" id="CHEBI:65315"/>
        <dbReference type="ChEBI" id="CHEBI:74447"/>
        <dbReference type="EC" id="2.1.1.190"/>
    </reaction>
</comment>
<comment type="similarity">
    <text evidence="1">Belongs to the class I-like SAM-binding methyltransferase superfamily. RNA M5U methyltransferase family. RlmD subfamily.</text>
</comment>
<dbReference type="EC" id="2.1.1.190" evidence="1"/>
<dbReference type="EMBL" id="CP000267">
    <property type="protein sequence ID" value="ABD70490.1"/>
    <property type="molecule type" value="Genomic_DNA"/>
</dbReference>
<dbReference type="RefSeq" id="WP_011465056.1">
    <property type="nucleotide sequence ID" value="NC_007908.1"/>
</dbReference>
<dbReference type="SMR" id="Q21UR3"/>
<dbReference type="STRING" id="338969.Rfer_2778"/>
<dbReference type="KEGG" id="rfr:Rfer_2778"/>
<dbReference type="eggNOG" id="COG2265">
    <property type="taxonomic scope" value="Bacteria"/>
</dbReference>
<dbReference type="HOGENOM" id="CLU_014689_8_2_4"/>
<dbReference type="OrthoDB" id="9804590at2"/>
<dbReference type="Proteomes" id="UP000008332">
    <property type="component" value="Chromosome"/>
</dbReference>
<dbReference type="GO" id="GO:0051539">
    <property type="term" value="F:4 iron, 4 sulfur cluster binding"/>
    <property type="evidence" value="ECO:0007669"/>
    <property type="project" value="UniProtKB-KW"/>
</dbReference>
<dbReference type="GO" id="GO:0005506">
    <property type="term" value="F:iron ion binding"/>
    <property type="evidence" value="ECO:0007669"/>
    <property type="project" value="UniProtKB-UniRule"/>
</dbReference>
<dbReference type="GO" id="GO:0003723">
    <property type="term" value="F:RNA binding"/>
    <property type="evidence" value="ECO:0007669"/>
    <property type="project" value="InterPro"/>
</dbReference>
<dbReference type="GO" id="GO:0070041">
    <property type="term" value="F:rRNA (uridine-C5-)-methyltransferase activity"/>
    <property type="evidence" value="ECO:0007669"/>
    <property type="project" value="UniProtKB-UniRule"/>
</dbReference>
<dbReference type="GO" id="GO:0070475">
    <property type="term" value="P:rRNA base methylation"/>
    <property type="evidence" value="ECO:0007669"/>
    <property type="project" value="TreeGrafter"/>
</dbReference>
<dbReference type="CDD" id="cd02440">
    <property type="entry name" value="AdoMet_MTases"/>
    <property type="match status" value="1"/>
</dbReference>
<dbReference type="Gene3D" id="2.40.50.1070">
    <property type="match status" value="1"/>
</dbReference>
<dbReference type="Gene3D" id="2.40.50.140">
    <property type="entry name" value="Nucleic acid-binding proteins"/>
    <property type="match status" value="1"/>
</dbReference>
<dbReference type="Gene3D" id="3.40.50.150">
    <property type="entry name" value="Vaccinia Virus protein VP39"/>
    <property type="match status" value="1"/>
</dbReference>
<dbReference type="HAMAP" id="MF_01010">
    <property type="entry name" value="23SrRNA_methyltr_RlmD"/>
    <property type="match status" value="1"/>
</dbReference>
<dbReference type="InterPro" id="IPR001566">
    <property type="entry name" value="23S_rRNA_MeTrfase_RlmD"/>
</dbReference>
<dbReference type="InterPro" id="IPR030391">
    <property type="entry name" value="MeTrfase_TrmA_CS"/>
</dbReference>
<dbReference type="InterPro" id="IPR012340">
    <property type="entry name" value="NA-bd_OB-fold"/>
</dbReference>
<dbReference type="InterPro" id="IPR029063">
    <property type="entry name" value="SAM-dependent_MTases_sf"/>
</dbReference>
<dbReference type="InterPro" id="IPR010280">
    <property type="entry name" value="U5_MeTrfase_fam"/>
</dbReference>
<dbReference type="NCBIfam" id="NF009639">
    <property type="entry name" value="PRK13168.1"/>
    <property type="match status" value="1"/>
</dbReference>
<dbReference type="NCBIfam" id="TIGR00479">
    <property type="entry name" value="rumA"/>
    <property type="match status" value="1"/>
</dbReference>
<dbReference type="PANTHER" id="PTHR11061:SF49">
    <property type="entry name" value="23S RRNA (URACIL(1939)-C(5))-METHYLTRANSFERASE RLMD"/>
    <property type="match status" value="1"/>
</dbReference>
<dbReference type="PANTHER" id="PTHR11061">
    <property type="entry name" value="RNA M5U METHYLTRANSFERASE"/>
    <property type="match status" value="1"/>
</dbReference>
<dbReference type="Pfam" id="PF05958">
    <property type="entry name" value="tRNA_U5-meth_tr"/>
    <property type="match status" value="1"/>
</dbReference>
<dbReference type="SUPFAM" id="SSF50249">
    <property type="entry name" value="Nucleic acid-binding proteins"/>
    <property type="match status" value="1"/>
</dbReference>
<dbReference type="SUPFAM" id="SSF53335">
    <property type="entry name" value="S-adenosyl-L-methionine-dependent methyltransferases"/>
    <property type="match status" value="1"/>
</dbReference>
<dbReference type="PROSITE" id="PS51687">
    <property type="entry name" value="SAM_MT_RNA_M5U"/>
    <property type="match status" value="1"/>
</dbReference>
<dbReference type="PROSITE" id="PS01231">
    <property type="entry name" value="TRMA_2"/>
    <property type="match status" value="1"/>
</dbReference>
<proteinExistence type="inferred from homology"/>
<organism>
    <name type="scientific">Albidiferax ferrireducens (strain ATCC BAA-621 / DSM 15236 / T118)</name>
    <name type="common">Rhodoferax ferrireducens</name>
    <dbReference type="NCBI Taxonomy" id="338969"/>
    <lineage>
        <taxon>Bacteria</taxon>
        <taxon>Pseudomonadati</taxon>
        <taxon>Pseudomonadota</taxon>
        <taxon>Betaproteobacteria</taxon>
        <taxon>Burkholderiales</taxon>
        <taxon>Comamonadaceae</taxon>
        <taxon>Rhodoferax</taxon>
    </lineage>
</organism>
<evidence type="ECO:0000255" key="1">
    <source>
        <dbReference type="HAMAP-Rule" id="MF_01010"/>
    </source>
</evidence>
<accession>Q21UR3</accession>